<name>GRPE_YERP3</name>
<organism>
    <name type="scientific">Yersinia pseudotuberculosis serotype O:1b (strain IP 31758)</name>
    <dbReference type="NCBI Taxonomy" id="349747"/>
    <lineage>
        <taxon>Bacteria</taxon>
        <taxon>Pseudomonadati</taxon>
        <taxon>Pseudomonadota</taxon>
        <taxon>Gammaproteobacteria</taxon>
        <taxon>Enterobacterales</taxon>
        <taxon>Yersiniaceae</taxon>
        <taxon>Yersinia</taxon>
    </lineage>
</organism>
<dbReference type="EMBL" id="CP000720">
    <property type="protein sequence ID" value="ABS46085.1"/>
    <property type="molecule type" value="Genomic_DNA"/>
</dbReference>
<dbReference type="RefSeq" id="WP_002224622.1">
    <property type="nucleotide sequence ID" value="NC_009708.1"/>
</dbReference>
<dbReference type="SMR" id="A7FKS2"/>
<dbReference type="GeneID" id="49786790"/>
<dbReference type="KEGG" id="ypi:YpsIP31758_2887"/>
<dbReference type="HOGENOM" id="CLU_057217_6_0_6"/>
<dbReference type="Proteomes" id="UP000002412">
    <property type="component" value="Chromosome"/>
</dbReference>
<dbReference type="GO" id="GO:0005829">
    <property type="term" value="C:cytosol"/>
    <property type="evidence" value="ECO:0007669"/>
    <property type="project" value="TreeGrafter"/>
</dbReference>
<dbReference type="GO" id="GO:0000774">
    <property type="term" value="F:adenyl-nucleotide exchange factor activity"/>
    <property type="evidence" value="ECO:0007669"/>
    <property type="project" value="InterPro"/>
</dbReference>
<dbReference type="GO" id="GO:0042803">
    <property type="term" value="F:protein homodimerization activity"/>
    <property type="evidence" value="ECO:0007669"/>
    <property type="project" value="InterPro"/>
</dbReference>
<dbReference type="GO" id="GO:0051087">
    <property type="term" value="F:protein-folding chaperone binding"/>
    <property type="evidence" value="ECO:0007669"/>
    <property type="project" value="InterPro"/>
</dbReference>
<dbReference type="GO" id="GO:0051082">
    <property type="term" value="F:unfolded protein binding"/>
    <property type="evidence" value="ECO:0007669"/>
    <property type="project" value="TreeGrafter"/>
</dbReference>
<dbReference type="GO" id="GO:0006457">
    <property type="term" value="P:protein folding"/>
    <property type="evidence" value="ECO:0007669"/>
    <property type="project" value="InterPro"/>
</dbReference>
<dbReference type="CDD" id="cd00446">
    <property type="entry name" value="GrpE"/>
    <property type="match status" value="1"/>
</dbReference>
<dbReference type="FunFam" id="2.30.22.10:FF:000001">
    <property type="entry name" value="Protein GrpE"/>
    <property type="match status" value="1"/>
</dbReference>
<dbReference type="FunFam" id="3.90.20.20:FF:000001">
    <property type="entry name" value="Protein GrpE"/>
    <property type="match status" value="1"/>
</dbReference>
<dbReference type="Gene3D" id="3.90.20.20">
    <property type="match status" value="1"/>
</dbReference>
<dbReference type="Gene3D" id="2.30.22.10">
    <property type="entry name" value="Head domain of nucleotide exchange factor GrpE"/>
    <property type="match status" value="1"/>
</dbReference>
<dbReference type="HAMAP" id="MF_01151">
    <property type="entry name" value="GrpE"/>
    <property type="match status" value="1"/>
</dbReference>
<dbReference type="InterPro" id="IPR000740">
    <property type="entry name" value="GrpE"/>
</dbReference>
<dbReference type="InterPro" id="IPR013805">
    <property type="entry name" value="GrpE_coiled_coil"/>
</dbReference>
<dbReference type="InterPro" id="IPR009012">
    <property type="entry name" value="GrpE_head"/>
</dbReference>
<dbReference type="NCBIfam" id="NF010737">
    <property type="entry name" value="PRK14139.1"/>
    <property type="match status" value="1"/>
</dbReference>
<dbReference type="NCBIfam" id="NF010738">
    <property type="entry name" value="PRK14140.1"/>
    <property type="match status" value="1"/>
</dbReference>
<dbReference type="NCBIfam" id="NF010748">
    <property type="entry name" value="PRK14150.1"/>
    <property type="match status" value="1"/>
</dbReference>
<dbReference type="PANTHER" id="PTHR21237">
    <property type="entry name" value="GRPE PROTEIN"/>
    <property type="match status" value="1"/>
</dbReference>
<dbReference type="PANTHER" id="PTHR21237:SF23">
    <property type="entry name" value="GRPE PROTEIN HOMOLOG, MITOCHONDRIAL"/>
    <property type="match status" value="1"/>
</dbReference>
<dbReference type="Pfam" id="PF01025">
    <property type="entry name" value="GrpE"/>
    <property type="match status" value="1"/>
</dbReference>
<dbReference type="PRINTS" id="PR00773">
    <property type="entry name" value="GRPEPROTEIN"/>
</dbReference>
<dbReference type="SUPFAM" id="SSF58014">
    <property type="entry name" value="Coiled-coil domain of nucleotide exchange factor GrpE"/>
    <property type="match status" value="1"/>
</dbReference>
<dbReference type="SUPFAM" id="SSF51064">
    <property type="entry name" value="Head domain of nucleotide exchange factor GrpE"/>
    <property type="match status" value="1"/>
</dbReference>
<dbReference type="PROSITE" id="PS01071">
    <property type="entry name" value="GRPE"/>
    <property type="match status" value="1"/>
</dbReference>
<gene>
    <name evidence="1" type="primary">grpE</name>
    <name type="ordered locus">YpsIP31758_2887</name>
</gene>
<feature type="chain" id="PRO_1000065524" description="Protein GrpE">
    <location>
        <begin position="1"/>
        <end position="192"/>
    </location>
</feature>
<feature type="region of interest" description="Disordered" evidence="2">
    <location>
        <begin position="1"/>
        <end position="34"/>
    </location>
</feature>
<feature type="compositionally biased region" description="Polar residues" evidence="2">
    <location>
        <begin position="20"/>
        <end position="31"/>
    </location>
</feature>
<proteinExistence type="inferred from homology"/>
<reference key="1">
    <citation type="journal article" date="2007" name="PLoS Genet.">
        <title>The complete genome sequence of Yersinia pseudotuberculosis IP31758, the causative agent of Far East scarlet-like fever.</title>
        <authorList>
            <person name="Eppinger M."/>
            <person name="Rosovitz M.J."/>
            <person name="Fricke W.F."/>
            <person name="Rasko D.A."/>
            <person name="Kokorina G."/>
            <person name="Fayolle C."/>
            <person name="Lindler L.E."/>
            <person name="Carniel E."/>
            <person name="Ravel J."/>
        </authorList>
    </citation>
    <scope>NUCLEOTIDE SEQUENCE [LARGE SCALE GENOMIC DNA]</scope>
    <source>
        <strain>IP 31758</strain>
    </source>
</reference>
<accession>A7FKS2</accession>
<keyword id="KW-0143">Chaperone</keyword>
<keyword id="KW-0963">Cytoplasm</keyword>
<keyword id="KW-0346">Stress response</keyword>
<evidence type="ECO:0000255" key="1">
    <source>
        <dbReference type="HAMAP-Rule" id="MF_01151"/>
    </source>
</evidence>
<evidence type="ECO:0000256" key="2">
    <source>
        <dbReference type="SAM" id="MobiDB-lite"/>
    </source>
</evidence>
<protein>
    <recommendedName>
        <fullName evidence="1">Protein GrpE</fullName>
    </recommendedName>
    <alternativeName>
        <fullName evidence="1">HSP-70 cofactor</fullName>
    </alternativeName>
</protein>
<sequence>MSSKEQKTPNEQVSEEMENTAEQQVEATQETGECVDPRVAELEVQLSDALQRERESLLRAKAEVENIRRRTELDVEKAHKFALERFSSELLPVIDNLERALDTADKTNTELTSMIEGVELTLKSLLDAVGKFGIEVVGETHVPFNPEVHQAMTMLESADHEPNHVMMVMQKGYTLNGRLLRPAMVAVSKAKS</sequence>
<comment type="function">
    <text evidence="1">Participates actively in the response to hyperosmotic and heat shock by preventing the aggregation of stress-denatured proteins, in association with DnaK and GrpE. It is the nucleotide exchange factor for DnaK and may function as a thermosensor. Unfolded proteins bind initially to DnaJ; upon interaction with the DnaJ-bound protein, DnaK hydrolyzes its bound ATP, resulting in the formation of a stable complex. GrpE releases ADP from DnaK; ATP binding to DnaK triggers the release of the substrate protein, thus completing the reaction cycle. Several rounds of ATP-dependent interactions between DnaJ, DnaK and GrpE are required for fully efficient folding.</text>
</comment>
<comment type="subunit">
    <text evidence="1">Homodimer.</text>
</comment>
<comment type="subcellular location">
    <subcellularLocation>
        <location evidence="1">Cytoplasm</location>
    </subcellularLocation>
</comment>
<comment type="similarity">
    <text evidence="1">Belongs to the GrpE family.</text>
</comment>